<gene>
    <name evidence="1" type="primary">engB</name>
    <name type="ordered locus">BCI_0113</name>
</gene>
<comment type="function">
    <text evidence="1">Necessary for normal cell division and for the maintenance of normal septation.</text>
</comment>
<comment type="cofactor">
    <cofactor evidence="1">
        <name>Mg(2+)</name>
        <dbReference type="ChEBI" id="CHEBI:18420"/>
    </cofactor>
</comment>
<comment type="similarity">
    <text evidence="1">Belongs to the TRAFAC class TrmE-Era-EngA-EngB-Septin-like GTPase superfamily. EngB GTPase family.</text>
</comment>
<organism>
    <name type="scientific">Baumannia cicadellinicola subsp. Homalodisca coagulata</name>
    <dbReference type="NCBI Taxonomy" id="374463"/>
    <lineage>
        <taxon>Bacteria</taxon>
        <taxon>Pseudomonadati</taxon>
        <taxon>Pseudomonadota</taxon>
        <taxon>Gammaproteobacteria</taxon>
        <taxon>Candidatus Palibaumannia</taxon>
    </lineage>
</organism>
<dbReference type="EMBL" id="CP000238">
    <property type="protein sequence ID" value="ABF13808.1"/>
    <property type="molecule type" value="Genomic_DNA"/>
</dbReference>
<dbReference type="RefSeq" id="WP_011520317.1">
    <property type="nucleotide sequence ID" value="NC_007984.1"/>
</dbReference>
<dbReference type="SMR" id="Q1LTY0"/>
<dbReference type="STRING" id="374463.BCI_0113"/>
<dbReference type="KEGG" id="bci:BCI_0113"/>
<dbReference type="HOGENOM" id="CLU_033732_1_0_6"/>
<dbReference type="OrthoDB" id="9804921at2"/>
<dbReference type="Proteomes" id="UP000002427">
    <property type="component" value="Chromosome"/>
</dbReference>
<dbReference type="GO" id="GO:0005829">
    <property type="term" value="C:cytosol"/>
    <property type="evidence" value="ECO:0007669"/>
    <property type="project" value="TreeGrafter"/>
</dbReference>
<dbReference type="GO" id="GO:0005525">
    <property type="term" value="F:GTP binding"/>
    <property type="evidence" value="ECO:0007669"/>
    <property type="project" value="UniProtKB-UniRule"/>
</dbReference>
<dbReference type="GO" id="GO:0046872">
    <property type="term" value="F:metal ion binding"/>
    <property type="evidence" value="ECO:0007669"/>
    <property type="project" value="UniProtKB-KW"/>
</dbReference>
<dbReference type="GO" id="GO:0000917">
    <property type="term" value="P:division septum assembly"/>
    <property type="evidence" value="ECO:0007669"/>
    <property type="project" value="UniProtKB-KW"/>
</dbReference>
<dbReference type="CDD" id="cd01876">
    <property type="entry name" value="YihA_EngB"/>
    <property type="match status" value="1"/>
</dbReference>
<dbReference type="Gene3D" id="3.40.50.300">
    <property type="entry name" value="P-loop containing nucleotide triphosphate hydrolases"/>
    <property type="match status" value="1"/>
</dbReference>
<dbReference type="HAMAP" id="MF_00321">
    <property type="entry name" value="GTPase_EngB"/>
    <property type="match status" value="1"/>
</dbReference>
<dbReference type="InterPro" id="IPR030393">
    <property type="entry name" value="G_ENGB_dom"/>
</dbReference>
<dbReference type="InterPro" id="IPR006073">
    <property type="entry name" value="GTP-bd"/>
</dbReference>
<dbReference type="InterPro" id="IPR019987">
    <property type="entry name" value="GTP-bd_ribosome_bio_YsxC"/>
</dbReference>
<dbReference type="InterPro" id="IPR027417">
    <property type="entry name" value="P-loop_NTPase"/>
</dbReference>
<dbReference type="NCBIfam" id="TIGR03598">
    <property type="entry name" value="GTPase_YsxC"/>
    <property type="match status" value="1"/>
</dbReference>
<dbReference type="PANTHER" id="PTHR11649:SF13">
    <property type="entry name" value="ENGB-TYPE G DOMAIN-CONTAINING PROTEIN"/>
    <property type="match status" value="1"/>
</dbReference>
<dbReference type="PANTHER" id="PTHR11649">
    <property type="entry name" value="MSS1/TRME-RELATED GTP-BINDING PROTEIN"/>
    <property type="match status" value="1"/>
</dbReference>
<dbReference type="Pfam" id="PF01926">
    <property type="entry name" value="MMR_HSR1"/>
    <property type="match status" value="1"/>
</dbReference>
<dbReference type="SUPFAM" id="SSF52540">
    <property type="entry name" value="P-loop containing nucleoside triphosphate hydrolases"/>
    <property type="match status" value="1"/>
</dbReference>
<dbReference type="PROSITE" id="PS51706">
    <property type="entry name" value="G_ENGB"/>
    <property type="match status" value="1"/>
</dbReference>
<feature type="chain" id="PRO_0000266823" description="Probable GTP-binding protein EngB">
    <location>
        <begin position="1"/>
        <end position="202"/>
    </location>
</feature>
<feature type="domain" description="EngB-type G" evidence="1">
    <location>
        <begin position="26"/>
        <end position="200"/>
    </location>
</feature>
<feature type="binding site" evidence="1">
    <location>
        <begin position="34"/>
        <end position="41"/>
    </location>
    <ligand>
        <name>GTP</name>
        <dbReference type="ChEBI" id="CHEBI:37565"/>
    </ligand>
</feature>
<feature type="binding site" evidence="1">
    <location>
        <position position="41"/>
    </location>
    <ligand>
        <name>Mg(2+)</name>
        <dbReference type="ChEBI" id="CHEBI:18420"/>
    </ligand>
</feature>
<feature type="binding site" evidence="1">
    <location>
        <begin position="61"/>
        <end position="65"/>
    </location>
    <ligand>
        <name>GTP</name>
        <dbReference type="ChEBI" id="CHEBI:37565"/>
    </ligand>
</feature>
<feature type="binding site" evidence="1">
    <location>
        <position position="63"/>
    </location>
    <ligand>
        <name>Mg(2+)</name>
        <dbReference type="ChEBI" id="CHEBI:18420"/>
    </ligand>
</feature>
<feature type="binding site" evidence="1">
    <location>
        <begin position="79"/>
        <end position="82"/>
    </location>
    <ligand>
        <name>GTP</name>
        <dbReference type="ChEBI" id="CHEBI:37565"/>
    </ligand>
</feature>
<feature type="binding site" evidence="1">
    <location>
        <begin position="146"/>
        <end position="149"/>
    </location>
    <ligand>
        <name>GTP</name>
        <dbReference type="ChEBI" id="CHEBI:37565"/>
    </ligand>
</feature>
<feature type="binding site" evidence="1">
    <location>
        <begin position="179"/>
        <end position="181"/>
    </location>
    <ligand>
        <name>GTP</name>
        <dbReference type="ChEBI" id="CHEBI:37565"/>
    </ligand>
</feature>
<name>ENGB_BAUCH</name>
<accession>Q1LTY0</accession>
<proteinExistence type="inferred from homology"/>
<keyword id="KW-0131">Cell cycle</keyword>
<keyword id="KW-0132">Cell division</keyword>
<keyword id="KW-0342">GTP-binding</keyword>
<keyword id="KW-0460">Magnesium</keyword>
<keyword id="KW-0479">Metal-binding</keyword>
<keyword id="KW-0547">Nucleotide-binding</keyword>
<keyword id="KW-1185">Reference proteome</keyword>
<keyword id="KW-0717">Septation</keyword>
<reference key="1">
    <citation type="journal article" date="2006" name="PLoS Biol.">
        <title>Metabolic complementarity and genomics of the dual bacterial symbiosis of sharpshooters.</title>
        <authorList>
            <person name="Wu D."/>
            <person name="Daugherty S.C."/>
            <person name="Van Aken S.E."/>
            <person name="Pai G.H."/>
            <person name="Watkins K.L."/>
            <person name="Khouri H."/>
            <person name="Tallon L.J."/>
            <person name="Zaborsky J.M."/>
            <person name="Dunbar H.E."/>
            <person name="Tran P.L."/>
            <person name="Moran N.A."/>
            <person name="Eisen J.A."/>
        </authorList>
    </citation>
    <scope>NUCLEOTIDE SEQUENCE [LARGE SCALE GENOMIC DNA]</scope>
</reference>
<protein>
    <recommendedName>
        <fullName evidence="1">Probable GTP-binding protein EngB</fullName>
    </recommendedName>
</protein>
<sequence>MIHKYDYHKTHFLFSTSCIKNLLYNVSKEIAFTGSSNVGKSSVINTLTNQKNLARTSKKPGSTKTVNVFEVEPGVNLIDLPGYGYVTMPVALKYHWQHDLIYFLQKCTNLKGLVVLMDIRHPMKFLDKYIIQCAIENKIQVFILLNKADKMNAYACNTQYHTVQQHLSNLESNIKITLFSSVTKLGIKKLKAQLDSWFSIVS</sequence>
<evidence type="ECO:0000255" key="1">
    <source>
        <dbReference type="HAMAP-Rule" id="MF_00321"/>
    </source>
</evidence>